<comment type="function">
    <text evidence="1">GTPase that plays an essential role in the late steps of ribosome biogenesis.</text>
</comment>
<comment type="subunit">
    <text evidence="1">Associates with the 50S ribosomal subunit.</text>
</comment>
<comment type="similarity">
    <text evidence="1">Belongs to the TRAFAC class TrmE-Era-EngA-EngB-Septin-like GTPase superfamily. EngA (Der) GTPase family.</text>
</comment>
<dbReference type="EMBL" id="AL591981">
    <property type="protein sequence ID" value="CAD00015.1"/>
    <property type="molecule type" value="Genomic_DNA"/>
</dbReference>
<dbReference type="PIR" id="AI1316">
    <property type="entry name" value="AI1316"/>
</dbReference>
<dbReference type="RefSeq" id="NP_465461.1">
    <property type="nucleotide sequence ID" value="NC_003210.1"/>
</dbReference>
<dbReference type="RefSeq" id="WP_003727996.1">
    <property type="nucleotide sequence ID" value="NZ_CP149495.1"/>
</dbReference>
<dbReference type="SMR" id="Q8Y5W8"/>
<dbReference type="STRING" id="169963.gene:17594622"/>
<dbReference type="PaxDb" id="169963-lmo1937"/>
<dbReference type="EnsemblBacteria" id="CAD00015">
    <property type="protein sequence ID" value="CAD00015"/>
    <property type="gene ID" value="CAD00015"/>
</dbReference>
<dbReference type="GeneID" id="986528"/>
<dbReference type="KEGG" id="lmo:lmo1937"/>
<dbReference type="PATRIC" id="fig|169963.11.peg.1984"/>
<dbReference type="eggNOG" id="COG1160">
    <property type="taxonomic scope" value="Bacteria"/>
</dbReference>
<dbReference type="HOGENOM" id="CLU_016077_6_2_9"/>
<dbReference type="OrthoDB" id="9805918at2"/>
<dbReference type="PhylomeDB" id="Q8Y5W8"/>
<dbReference type="BioCyc" id="LMON169963:LMO1937-MONOMER"/>
<dbReference type="Proteomes" id="UP000000817">
    <property type="component" value="Chromosome"/>
</dbReference>
<dbReference type="GO" id="GO:0005525">
    <property type="term" value="F:GTP binding"/>
    <property type="evidence" value="ECO:0007669"/>
    <property type="project" value="UniProtKB-UniRule"/>
</dbReference>
<dbReference type="GO" id="GO:0043022">
    <property type="term" value="F:ribosome binding"/>
    <property type="evidence" value="ECO:0000318"/>
    <property type="project" value="GO_Central"/>
</dbReference>
<dbReference type="GO" id="GO:0042254">
    <property type="term" value="P:ribosome biogenesis"/>
    <property type="evidence" value="ECO:0007669"/>
    <property type="project" value="UniProtKB-KW"/>
</dbReference>
<dbReference type="CDD" id="cd01894">
    <property type="entry name" value="EngA1"/>
    <property type="match status" value="1"/>
</dbReference>
<dbReference type="CDD" id="cd01895">
    <property type="entry name" value="EngA2"/>
    <property type="match status" value="1"/>
</dbReference>
<dbReference type="FunFam" id="3.30.300.20:FF:000004">
    <property type="entry name" value="GTPase Der"/>
    <property type="match status" value="1"/>
</dbReference>
<dbReference type="FunFam" id="3.40.50.300:FF:000040">
    <property type="entry name" value="GTPase Der"/>
    <property type="match status" value="1"/>
</dbReference>
<dbReference type="FunFam" id="3.40.50.300:FF:000057">
    <property type="entry name" value="GTPase Der"/>
    <property type="match status" value="1"/>
</dbReference>
<dbReference type="Gene3D" id="3.30.300.20">
    <property type="match status" value="1"/>
</dbReference>
<dbReference type="Gene3D" id="3.40.50.300">
    <property type="entry name" value="P-loop containing nucleotide triphosphate hydrolases"/>
    <property type="match status" value="2"/>
</dbReference>
<dbReference type="HAMAP" id="MF_00195">
    <property type="entry name" value="GTPase_Der"/>
    <property type="match status" value="1"/>
</dbReference>
<dbReference type="InterPro" id="IPR031166">
    <property type="entry name" value="G_ENGA"/>
</dbReference>
<dbReference type="InterPro" id="IPR006073">
    <property type="entry name" value="GTP-bd"/>
</dbReference>
<dbReference type="InterPro" id="IPR016484">
    <property type="entry name" value="GTPase_Der"/>
</dbReference>
<dbReference type="InterPro" id="IPR032859">
    <property type="entry name" value="KH_dom-like"/>
</dbReference>
<dbReference type="InterPro" id="IPR015946">
    <property type="entry name" value="KH_dom-like_a/b"/>
</dbReference>
<dbReference type="InterPro" id="IPR027417">
    <property type="entry name" value="P-loop_NTPase"/>
</dbReference>
<dbReference type="InterPro" id="IPR005225">
    <property type="entry name" value="Small_GTP-bd"/>
</dbReference>
<dbReference type="NCBIfam" id="TIGR03594">
    <property type="entry name" value="GTPase_EngA"/>
    <property type="match status" value="1"/>
</dbReference>
<dbReference type="NCBIfam" id="TIGR00231">
    <property type="entry name" value="small_GTP"/>
    <property type="match status" value="2"/>
</dbReference>
<dbReference type="PANTHER" id="PTHR43834">
    <property type="entry name" value="GTPASE DER"/>
    <property type="match status" value="1"/>
</dbReference>
<dbReference type="PANTHER" id="PTHR43834:SF6">
    <property type="entry name" value="GTPASE DER"/>
    <property type="match status" value="1"/>
</dbReference>
<dbReference type="Pfam" id="PF14714">
    <property type="entry name" value="KH_dom-like"/>
    <property type="match status" value="1"/>
</dbReference>
<dbReference type="Pfam" id="PF01926">
    <property type="entry name" value="MMR_HSR1"/>
    <property type="match status" value="2"/>
</dbReference>
<dbReference type="PIRSF" id="PIRSF006485">
    <property type="entry name" value="GTP-binding_EngA"/>
    <property type="match status" value="1"/>
</dbReference>
<dbReference type="PRINTS" id="PR00326">
    <property type="entry name" value="GTP1OBG"/>
</dbReference>
<dbReference type="SUPFAM" id="SSF52540">
    <property type="entry name" value="P-loop containing nucleoside triphosphate hydrolases"/>
    <property type="match status" value="2"/>
</dbReference>
<dbReference type="PROSITE" id="PS51712">
    <property type="entry name" value="G_ENGA"/>
    <property type="match status" value="2"/>
</dbReference>
<gene>
    <name evidence="1" type="primary">der</name>
    <name type="synonym">engA</name>
    <name type="ordered locus">lmo1937</name>
</gene>
<reference key="1">
    <citation type="journal article" date="2001" name="Science">
        <title>Comparative genomics of Listeria species.</title>
        <authorList>
            <person name="Glaser P."/>
            <person name="Frangeul L."/>
            <person name="Buchrieser C."/>
            <person name="Rusniok C."/>
            <person name="Amend A."/>
            <person name="Baquero F."/>
            <person name="Berche P."/>
            <person name="Bloecker H."/>
            <person name="Brandt P."/>
            <person name="Chakraborty T."/>
            <person name="Charbit A."/>
            <person name="Chetouani F."/>
            <person name="Couve E."/>
            <person name="de Daruvar A."/>
            <person name="Dehoux P."/>
            <person name="Domann E."/>
            <person name="Dominguez-Bernal G."/>
            <person name="Duchaud E."/>
            <person name="Durant L."/>
            <person name="Dussurget O."/>
            <person name="Entian K.-D."/>
            <person name="Fsihi H."/>
            <person name="Garcia-del Portillo F."/>
            <person name="Garrido P."/>
            <person name="Gautier L."/>
            <person name="Goebel W."/>
            <person name="Gomez-Lopez N."/>
            <person name="Hain T."/>
            <person name="Hauf J."/>
            <person name="Jackson D."/>
            <person name="Jones L.-M."/>
            <person name="Kaerst U."/>
            <person name="Kreft J."/>
            <person name="Kuhn M."/>
            <person name="Kunst F."/>
            <person name="Kurapkat G."/>
            <person name="Madueno E."/>
            <person name="Maitournam A."/>
            <person name="Mata Vicente J."/>
            <person name="Ng E."/>
            <person name="Nedjari H."/>
            <person name="Nordsiek G."/>
            <person name="Novella S."/>
            <person name="de Pablos B."/>
            <person name="Perez-Diaz J.-C."/>
            <person name="Purcell R."/>
            <person name="Remmel B."/>
            <person name="Rose M."/>
            <person name="Schlueter T."/>
            <person name="Simoes N."/>
            <person name="Tierrez A."/>
            <person name="Vazquez-Boland J.-A."/>
            <person name="Voss H."/>
            <person name="Wehland J."/>
            <person name="Cossart P."/>
        </authorList>
    </citation>
    <scope>NUCLEOTIDE SEQUENCE [LARGE SCALE GENOMIC DNA]</scope>
    <source>
        <strain>ATCC BAA-679 / EGD-e</strain>
    </source>
</reference>
<name>DER_LISMO</name>
<proteinExistence type="inferred from homology"/>
<evidence type="ECO:0000255" key="1">
    <source>
        <dbReference type="HAMAP-Rule" id="MF_00195"/>
    </source>
</evidence>
<accession>Q8Y5W8</accession>
<organism>
    <name type="scientific">Listeria monocytogenes serovar 1/2a (strain ATCC BAA-679 / EGD-e)</name>
    <dbReference type="NCBI Taxonomy" id="169963"/>
    <lineage>
        <taxon>Bacteria</taxon>
        <taxon>Bacillati</taxon>
        <taxon>Bacillota</taxon>
        <taxon>Bacilli</taxon>
        <taxon>Bacillales</taxon>
        <taxon>Listeriaceae</taxon>
        <taxon>Listeria</taxon>
    </lineage>
</organism>
<sequence>MAKPVVAIVGRPNVGKSTIFNRIVGERVSIVEDVPGVTRDRIYNSAEWLGKEFNIIDTGGIDLSDEPFLEQIRAQAEIAIDEADVIIFITNGREGVTDADEQVAKILYRSNKPIVLAINKVDNPEMRDQIYDFYSLGFGEPYPISGSHGLGLGDMLDAVRAHFPKEEEEEYPDDTVKFSLIGRPNVGKSSILNALLGEDRVIVSDIAGTTRDAIDTTYTFDGQDYVMIDTAGMRKRGKVYESTEKYSVLRAMRAIERSDVVLVVINAEEGIREQDKRIAGYAHDAGRAIIIVVNKWDAINKDEKTINVWTEDIREQFQFLSYAPIVFVSAKTKQRLNNLFPLINQVSDNHSLRVQSSMLNDVISDAVAMNPSPMDKGKRLKIFYTTQVAVKPPTFVVFVNDPELMHFSYERFLENRIREAFPFEGTPIRVIARKRK</sequence>
<keyword id="KW-0342">GTP-binding</keyword>
<keyword id="KW-0547">Nucleotide-binding</keyword>
<keyword id="KW-1185">Reference proteome</keyword>
<keyword id="KW-0677">Repeat</keyword>
<keyword id="KW-0690">Ribosome biogenesis</keyword>
<protein>
    <recommendedName>
        <fullName evidence="1">GTPase Der</fullName>
    </recommendedName>
    <alternativeName>
        <fullName evidence="1">GTP-binding protein EngA</fullName>
    </alternativeName>
</protein>
<feature type="chain" id="PRO_0000179010" description="GTPase Der">
    <location>
        <begin position="1"/>
        <end position="436"/>
    </location>
</feature>
<feature type="domain" description="EngA-type G 1">
    <location>
        <begin position="4"/>
        <end position="167"/>
    </location>
</feature>
<feature type="domain" description="EngA-type G 2">
    <location>
        <begin position="176"/>
        <end position="351"/>
    </location>
</feature>
<feature type="domain" description="KH-like" evidence="1">
    <location>
        <begin position="352"/>
        <end position="436"/>
    </location>
</feature>
<feature type="binding site" evidence="1">
    <location>
        <begin position="10"/>
        <end position="17"/>
    </location>
    <ligand>
        <name>GTP</name>
        <dbReference type="ChEBI" id="CHEBI:37565"/>
        <label>1</label>
    </ligand>
</feature>
<feature type="binding site" evidence="1">
    <location>
        <begin position="57"/>
        <end position="61"/>
    </location>
    <ligand>
        <name>GTP</name>
        <dbReference type="ChEBI" id="CHEBI:37565"/>
        <label>1</label>
    </ligand>
</feature>
<feature type="binding site" evidence="1">
    <location>
        <begin position="119"/>
        <end position="122"/>
    </location>
    <ligand>
        <name>GTP</name>
        <dbReference type="ChEBI" id="CHEBI:37565"/>
        <label>1</label>
    </ligand>
</feature>
<feature type="binding site" evidence="1">
    <location>
        <begin position="182"/>
        <end position="189"/>
    </location>
    <ligand>
        <name>GTP</name>
        <dbReference type="ChEBI" id="CHEBI:37565"/>
        <label>2</label>
    </ligand>
</feature>
<feature type="binding site" evidence="1">
    <location>
        <begin position="229"/>
        <end position="233"/>
    </location>
    <ligand>
        <name>GTP</name>
        <dbReference type="ChEBI" id="CHEBI:37565"/>
        <label>2</label>
    </ligand>
</feature>
<feature type="binding site" evidence="1">
    <location>
        <begin position="294"/>
        <end position="297"/>
    </location>
    <ligand>
        <name>GTP</name>
        <dbReference type="ChEBI" id="CHEBI:37565"/>
        <label>2</label>
    </ligand>
</feature>